<keyword id="KW-0963">Cytoplasm</keyword>
<keyword id="KW-0274">FAD</keyword>
<keyword id="KW-0285">Flavoprotein</keyword>
<keyword id="KW-0489">Methyltransferase</keyword>
<keyword id="KW-0520">NAD</keyword>
<keyword id="KW-0521">NADP</keyword>
<keyword id="KW-1185">Reference proteome</keyword>
<keyword id="KW-0808">Transferase</keyword>
<keyword id="KW-0819">tRNA processing</keyword>
<name>TRMFO_THEMA</name>
<comment type="function">
    <text evidence="1">Catalyzes the folate-dependent formation of 5-methyl-uridine at position 54 (M-5-U54) in all tRNAs.</text>
</comment>
<comment type="catalytic activity">
    <reaction evidence="1">
        <text>uridine(54) in tRNA + (6R)-5,10-methylene-5,6,7,8-tetrahydrofolate + NADH + H(+) = 5-methyluridine(54) in tRNA + (6S)-5,6,7,8-tetrahydrofolate + NAD(+)</text>
        <dbReference type="Rhea" id="RHEA:16873"/>
        <dbReference type="Rhea" id="RHEA-COMP:10167"/>
        <dbReference type="Rhea" id="RHEA-COMP:10193"/>
        <dbReference type="ChEBI" id="CHEBI:15378"/>
        <dbReference type="ChEBI" id="CHEBI:15636"/>
        <dbReference type="ChEBI" id="CHEBI:57453"/>
        <dbReference type="ChEBI" id="CHEBI:57540"/>
        <dbReference type="ChEBI" id="CHEBI:57945"/>
        <dbReference type="ChEBI" id="CHEBI:65315"/>
        <dbReference type="ChEBI" id="CHEBI:74447"/>
        <dbReference type="EC" id="2.1.1.74"/>
    </reaction>
</comment>
<comment type="catalytic activity">
    <reaction evidence="1">
        <text>uridine(54) in tRNA + (6R)-5,10-methylene-5,6,7,8-tetrahydrofolate + NADPH + H(+) = 5-methyluridine(54) in tRNA + (6S)-5,6,7,8-tetrahydrofolate + NADP(+)</text>
        <dbReference type="Rhea" id="RHEA:62372"/>
        <dbReference type="Rhea" id="RHEA-COMP:10167"/>
        <dbReference type="Rhea" id="RHEA-COMP:10193"/>
        <dbReference type="ChEBI" id="CHEBI:15378"/>
        <dbReference type="ChEBI" id="CHEBI:15636"/>
        <dbReference type="ChEBI" id="CHEBI:57453"/>
        <dbReference type="ChEBI" id="CHEBI:57783"/>
        <dbReference type="ChEBI" id="CHEBI:58349"/>
        <dbReference type="ChEBI" id="CHEBI:65315"/>
        <dbReference type="ChEBI" id="CHEBI:74447"/>
        <dbReference type="EC" id="2.1.1.74"/>
    </reaction>
</comment>
<comment type="cofactor">
    <cofactor evidence="1">
        <name>FAD</name>
        <dbReference type="ChEBI" id="CHEBI:57692"/>
    </cofactor>
</comment>
<comment type="subcellular location">
    <subcellularLocation>
        <location evidence="1">Cytoplasm</location>
    </subcellularLocation>
</comment>
<comment type="similarity">
    <text evidence="1">Belongs to the MnmG family. TrmFO subfamily.</text>
</comment>
<proteinExistence type="evidence at protein level"/>
<gene>
    <name evidence="1" type="primary">trmFO</name>
    <name type="synonym">gid</name>
    <name type="ordered locus">TM_0734</name>
</gene>
<dbReference type="EC" id="2.1.1.74" evidence="1"/>
<dbReference type="EMBL" id="AE000512">
    <property type="protein sequence ID" value="AAD35815.1"/>
    <property type="molecule type" value="Genomic_DNA"/>
</dbReference>
<dbReference type="PIR" id="A72339">
    <property type="entry name" value="A72339"/>
</dbReference>
<dbReference type="RefSeq" id="NP_228543.1">
    <property type="nucleotide sequence ID" value="NC_000853.1"/>
</dbReference>
<dbReference type="RefSeq" id="WP_004080992.1">
    <property type="nucleotide sequence ID" value="NZ_CP011107.1"/>
</dbReference>
<dbReference type="SMR" id="Q9WZJ3"/>
<dbReference type="FunCoup" id="Q9WZJ3">
    <property type="interactions" value="9"/>
</dbReference>
<dbReference type="STRING" id="243274.TM_0734"/>
<dbReference type="PaxDb" id="243274-THEMA_00985"/>
<dbReference type="EnsemblBacteria" id="AAD35815">
    <property type="protein sequence ID" value="AAD35815"/>
    <property type="gene ID" value="TM_0734"/>
</dbReference>
<dbReference type="KEGG" id="tma:TM0734"/>
<dbReference type="KEGG" id="tmi:THEMA_00985"/>
<dbReference type="KEGG" id="tmm:Tmari_0735"/>
<dbReference type="KEGG" id="tmw:THMA_0752"/>
<dbReference type="eggNOG" id="COG1206">
    <property type="taxonomic scope" value="Bacteria"/>
</dbReference>
<dbReference type="InParanoid" id="Q9WZJ3"/>
<dbReference type="OrthoDB" id="9803114at2"/>
<dbReference type="BRENDA" id="2.1.1.74">
    <property type="organism ID" value="6331"/>
</dbReference>
<dbReference type="Proteomes" id="UP000008183">
    <property type="component" value="Chromosome"/>
</dbReference>
<dbReference type="GO" id="GO:0005829">
    <property type="term" value="C:cytosol"/>
    <property type="evidence" value="ECO:0000318"/>
    <property type="project" value="GO_Central"/>
</dbReference>
<dbReference type="GO" id="GO:0050660">
    <property type="term" value="F:flavin adenine dinucleotide binding"/>
    <property type="evidence" value="ECO:0000318"/>
    <property type="project" value="GO_Central"/>
</dbReference>
<dbReference type="GO" id="GO:0047151">
    <property type="term" value="F:tRNA (uracil(54)-C5)-methyltransferase activity, 5,10-methylenetetrahydrofolate-dependent"/>
    <property type="evidence" value="ECO:0007669"/>
    <property type="project" value="UniProtKB-UniRule"/>
</dbReference>
<dbReference type="GO" id="GO:0030488">
    <property type="term" value="P:tRNA methylation"/>
    <property type="evidence" value="ECO:0000318"/>
    <property type="project" value="GO_Central"/>
</dbReference>
<dbReference type="GO" id="GO:0002098">
    <property type="term" value="P:tRNA wobble uridine modification"/>
    <property type="evidence" value="ECO:0000318"/>
    <property type="project" value="GO_Central"/>
</dbReference>
<dbReference type="FunFam" id="3.50.50.60:FF:000359">
    <property type="entry name" value="Methylenetetrahydrofolate--tRNA-(uracil-5-)-methyltransferase TrmFO"/>
    <property type="match status" value="1"/>
</dbReference>
<dbReference type="FunFam" id="3.50.50.60:FF:000412">
    <property type="entry name" value="Methylenetetrahydrofolate--tRNA-(uracil-5-)-methyltransferase TrmFO"/>
    <property type="match status" value="1"/>
</dbReference>
<dbReference type="Gene3D" id="3.50.50.60">
    <property type="entry name" value="FAD/NAD(P)-binding domain"/>
    <property type="match status" value="2"/>
</dbReference>
<dbReference type="HAMAP" id="MF_01037">
    <property type="entry name" value="TrmFO"/>
    <property type="match status" value="1"/>
</dbReference>
<dbReference type="InterPro" id="IPR036188">
    <property type="entry name" value="FAD/NAD-bd_sf"/>
</dbReference>
<dbReference type="InterPro" id="IPR002218">
    <property type="entry name" value="MnmG-rel"/>
</dbReference>
<dbReference type="InterPro" id="IPR040131">
    <property type="entry name" value="MnmG_N"/>
</dbReference>
<dbReference type="InterPro" id="IPR004417">
    <property type="entry name" value="TrmFO"/>
</dbReference>
<dbReference type="NCBIfam" id="TIGR00137">
    <property type="entry name" value="gid_trmFO"/>
    <property type="match status" value="1"/>
</dbReference>
<dbReference type="NCBIfam" id="NF003739">
    <property type="entry name" value="PRK05335.1"/>
    <property type="match status" value="1"/>
</dbReference>
<dbReference type="PANTHER" id="PTHR11806">
    <property type="entry name" value="GLUCOSE INHIBITED DIVISION PROTEIN A"/>
    <property type="match status" value="1"/>
</dbReference>
<dbReference type="PANTHER" id="PTHR11806:SF2">
    <property type="entry name" value="METHYLENETETRAHYDROFOLATE--TRNA-(URACIL-5-)-METHYLTRANSFERASE TRMFO"/>
    <property type="match status" value="1"/>
</dbReference>
<dbReference type="Pfam" id="PF01134">
    <property type="entry name" value="GIDA"/>
    <property type="match status" value="1"/>
</dbReference>
<dbReference type="SUPFAM" id="SSF51905">
    <property type="entry name" value="FAD/NAD(P)-binding domain"/>
    <property type="match status" value="1"/>
</dbReference>
<sequence>MIVNVIGAGLAGSEVAYNLGKRGIRVRLFEMRPKKMTEVHKTGYFAELVCSNSLKSEDITNAEGLLKAEMRLMGSITLEAAEKARVPSGKALAVDRNIFAKEVTEVIERLESVEIIREEVTEFDPEEGIWVVATGPATSDGLLPFLKKLLGDDLLFFFDAVSPIVTFESIDMECAFWGDRFGKGKDYINCPLTKEEYEEFWKALVEAEVIEMEDFDRKLLFERCQPIEEIARSGKDALRYGPLRPTGLVDPRTGKEPYAVVQLRREDKEGRFYSLVGFQTRLKWSEQKRVLRKIPCLRNAEIVRYGVMHRNVYINSPKLLDIFFRLKKHPNIFFAGQITGVEGYMESAASGIYVAYNVHRILKGLSPLKLPEETMMGALFSYIIEKVEGDLKPMYANFGLLPPLKVRVKDKFEKRKKLAERAIETMKKFLEENPW</sequence>
<evidence type="ECO:0000255" key="1">
    <source>
        <dbReference type="HAMAP-Rule" id="MF_01037"/>
    </source>
</evidence>
<protein>
    <recommendedName>
        <fullName evidence="1">Methylenetetrahydrofolate--tRNA-(uracil-5-)-methyltransferase TrmFO</fullName>
        <ecNumber evidence="1">2.1.1.74</ecNumber>
    </recommendedName>
    <alternativeName>
        <fullName evidence="1">Folate-dependent tRNA (uracil-5-)-methyltransferase</fullName>
    </alternativeName>
    <alternativeName>
        <fullName evidence="1">Folate-dependent tRNA(M-5-U54)-methyltransferase</fullName>
    </alternativeName>
</protein>
<accession>Q9WZJ3</accession>
<reference key="1">
    <citation type="journal article" date="1999" name="Nature">
        <title>Evidence for lateral gene transfer between Archaea and Bacteria from genome sequence of Thermotoga maritima.</title>
        <authorList>
            <person name="Nelson K.E."/>
            <person name="Clayton R.A."/>
            <person name="Gill S.R."/>
            <person name="Gwinn M.L."/>
            <person name="Dodson R.J."/>
            <person name="Haft D.H."/>
            <person name="Hickey E.K."/>
            <person name="Peterson J.D."/>
            <person name="Nelson W.C."/>
            <person name="Ketchum K.A."/>
            <person name="McDonald L.A."/>
            <person name="Utterback T.R."/>
            <person name="Malek J.A."/>
            <person name="Linher K.D."/>
            <person name="Garrett M.M."/>
            <person name="Stewart A.M."/>
            <person name="Cotton M.D."/>
            <person name="Pratt M.S."/>
            <person name="Phillips C.A."/>
            <person name="Richardson D.L."/>
            <person name="Heidelberg J.F."/>
            <person name="Sutton G.G."/>
            <person name="Fleischmann R.D."/>
            <person name="Eisen J.A."/>
            <person name="White O."/>
            <person name="Salzberg S.L."/>
            <person name="Smith H.O."/>
            <person name="Venter J.C."/>
            <person name="Fraser C.M."/>
        </authorList>
    </citation>
    <scope>NUCLEOTIDE SEQUENCE [LARGE SCALE GENOMIC DNA]</scope>
    <source>
        <strain>ATCC 43589 / DSM 3109 / JCM 10099 / NBRC 100826 / MSB8</strain>
    </source>
</reference>
<reference key="2">
    <citation type="journal article" date="2008" name="Acta Crystallogr. F">
        <title>Crystallization and preliminary X-ray crystallographic characterization of TrmFO, a folate-dependent tRNA methyltransferase from Thermotoga maritima.</title>
        <authorList>
            <person name="Cicmil N."/>
        </authorList>
    </citation>
    <scope>CRYSTALLIZATION</scope>
</reference>
<organism>
    <name type="scientific">Thermotoga maritima (strain ATCC 43589 / DSM 3109 / JCM 10099 / NBRC 100826 / MSB8)</name>
    <dbReference type="NCBI Taxonomy" id="243274"/>
    <lineage>
        <taxon>Bacteria</taxon>
        <taxon>Thermotogati</taxon>
        <taxon>Thermotogota</taxon>
        <taxon>Thermotogae</taxon>
        <taxon>Thermotogales</taxon>
        <taxon>Thermotogaceae</taxon>
        <taxon>Thermotoga</taxon>
    </lineage>
</organism>
<feature type="chain" id="PRO_0000117284" description="Methylenetetrahydrofolate--tRNA-(uracil-5-)-methyltransferase TrmFO">
    <location>
        <begin position="1"/>
        <end position="435"/>
    </location>
</feature>
<feature type="binding site" evidence="1">
    <location>
        <begin position="7"/>
        <end position="12"/>
    </location>
    <ligand>
        <name>FAD</name>
        <dbReference type="ChEBI" id="CHEBI:57692"/>
    </ligand>
</feature>